<dbReference type="EMBL" id="L35574">
    <property type="protein sequence ID" value="AAA85080.1"/>
    <property type="molecule type" value="Genomic_DNA"/>
</dbReference>
<dbReference type="EMBL" id="AB001488">
    <property type="protein sequence ID" value="BAA19304.1"/>
    <property type="molecule type" value="Genomic_DNA"/>
</dbReference>
<dbReference type="EMBL" id="AL009126">
    <property type="protein sequence ID" value="CAB12274.1"/>
    <property type="molecule type" value="Genomic_DNA"/>
</dbReference>
<dbReference type="PIR" id="E69701">
    <property type="entry name" value="E69701"/>
</dbReference>
<dbReference type="RefSeq" id="NP_388348.1">
    <property type="nucleotide sequence ID" value="NC_000964.3"/>
</dbReference>
<dbReference type="RefSeq" id="WP_009966610.1">
    <property type="nucleotide sequence ID" value="NZ_OZ025638.1"/>
</dbReference>
<dbReference type="PDB" id="2BNL">
    <property type="method" value="X-ray"/>
    <property type="resolution" value="2.00 A"/>
    <property type="chains" value="A/B/C/D/E/F=1-136"/>
</dbReference>
<dbReference type="PDBsum" id="2BNL"/>
<dbReference type="SMR" id="P42409"/>
<dbReference type="DIP" id="DIP-375N"/>
<dbReference type="FunCoup" id="P42409">
    <property type="interactions" value="13"/>
</dbReference>
<dbReference type="IntAct" id="P42409">
    <property type="interactions" value="2"/>
</dbReference>
<dbReference type="STRING" id="224308.BSU04670"/>
<dbReference type="iPTMnet" id="P42409"/>
<dbReference type="jPOST" id="P42409"/>
<dbReference type="PaxDb" id="224308-BSU04670"/>
<dbReference type="EnsemblBacteria" id="CAB12274">
    <property type="protein sequence ID" value="CAB12274"/>
    <property type="gene ID" value="BSU_04670"/>
</dbReference>
<dbReference type="GeneID" id="938176"/>
<dbReference type="KEGG" id="bsu:BSU04670"/>
<dbReference type="PATRIC" id="fig|224308.43.peg.487"/>
<dbReference type="eggNOG" id="COG1366">
    <property type="taxonomic scope" value="Bacteria"/>
</dbReference>
<dbReference type="InParanoid" id="P42409"/>
<dbReference type="OrthoDB" id="9800154at2"/>
<dbReference type="PhylomeDB" id="P42409"/>
<dbReference type="BioCyc" id="BSUB:BSU04670-MONOMER"/>
<dbReference type="EvolutionaryTrace" id="P42409"/>
<dbReference type="Proteomes" id="UP000001570">
    <property type="component" value="Chromosome"/>
</dbReference>
<dbReference type="GO" id="GO:0020037">
    <property type="term" value="F:heme binding"/>
    <property type="evidence" value="ECO:0007669"/>
    <property type="project" value="InterPro"/>
</dbReference>
<dbReference type="GO" id="GO:0019825">
    <property type="term" value="F:oxygen binding"/>
    <property type="evidence" value="ECO:0007669"/>
    <property type="project" value="InterPro"/>
</dbReference>
<dbReference type="CDD" id="cd19413">
    <property type="entry name" value="RsbR_N-like"/>
    <property type="match status" value="1"/>
</dbReference>
<dbReference type="CDD" id="cd07041">
    <property type="entry name" value="STAS_RsbR_RsbS_like"/>
    <property type="match status" value="1"/>
</dbReference>
<dbReference type="Gene3D" id="1.10.490.10">
    <property type="entry name" value="Globins"/>
    <property type="match status" value="1"/>
</dbReference>
<dbReference type="Gene3D" id="3.30.750.24">
    <property type="entry name" value="STAS domain"/>
    <property type="match status" value="1"/>
</dbReference>
<dbReference type="InterPro" id="IPR051932">
    <property type="entry name" value="Bact_StressResp_Reg"/>
</dbReference>
<dbReference type="InterPro" id="IPR012292">
    <property type="entry name" value="Globin/Proto"/>
</dbReference>
<dbReference type="InterPro" id="IPR014792">
    <property type="entry name" value="RsbRA_N"/>
</dbReference>
<dbReference type="InterPro" id="IPR002645">
    <property type="entry name" value="STAS_dom"/>
</dbReference>
<dbReference type="InterPro" id="IPR036513">
    <property type="entry name" value="STAS_dom_sf"/>
</dbReference>
<dbReference type="PANTHER" id="PTHR33745">
    <property type="entry name" value="RSBT ANTAGONIST PROTEIN RSBS-RELATED"/>
    <property type="match status" value="1"/>
</dbReference>
<dbReference type="PANTHER" id="PTHR33745:SF3">
    <property type="entry name" value="RSBT CO-ANTAGONIST PROTEIN RSBRC"/>
    <property type="match status" value="1"/>
</dbReference>
<dbReference type="Pfam" id="PF08678">
    <property type="entry name" value="Rsbr_N"/>
    <property type="match status" value="1"/>
</dbReference>
<dbReference type="Pfam" id="PF01740">
    <property type="entry name" value="STAS"/>
    <property type="match status" value="1"/>
</dbReference>
<dbReference type="SUPFAM" id="SSF52091">
    <property type="entry name" value="SpoIIaa-like"/>
    <property type="match status" value="1"/>
</dbReference>
<dbReference type="PROSITE" id="PS50801">
    <property type="entry name" value="STAS"/>
    <property type="match status" value="1"/>
</dbReference>
<gene>
    <name type="primary">rsbRA</name>
    <name type="synonym">rsbR</name>
    <name type="synonym">ycxR</name>
    <name type="ordered locus">BSU04670</name>
</gene>
<proteinExistence type="evidence at protein level"/>
<sequence length="274" mass="31050">MMSNQTVYQFIAENQNELLQLWTDTLKELSEQESYQLTDQVYENISKEYIDILLLSVKDENAAESQISELALRAVQIGLSMKFLATALAEFWKRLYTKMNDKRLPDQESTELIWQIDRFFSPINTEIFNQYSISWEKTVSLQKIALQELSAPLIPVFENITVMPLVGTIDTERAKRIMENLLNGVVKHRSQVVLIDITGVPVVDTMVAHHIIQASEAVRLVGAKCLLAGIRPEIAQTIVNLGIDLSQVITKNTLQKGIQTALEMTDRKIVSLGE</sequence>
<keyword id="KW-0002">3D-structure</keyword>
<keyword id="KW-0597">Phosphoprotein</keyword>
<keyword id="KW-1185">Reference proteome</keyword>
<reference key="1">
    <citation type="journal article" date="1995" name="J. Bacteriol.">
        <title>Four additional genes in the sigB operon of Bacillus subtilis that control activity of the general stress factor sigma B in response to environmental signals.</title>
        <authorList>
            <person name="Wise A.A."/>
            <person name="Price C.W."/>
        </authorList>
    </citation>
    <scope>NUCLEOTIDE SEQUENCE [GENOMIC DNA]</scope>
    <source>
        <strain>168 / Marburg / ATCC 6051 / DSM 10 / JCM 1465 / NBRC 13719 / NCIMB 3610 / NRRL NRS-744 / VKM B-501</strain>
    </source>
</reference>
<reference key="2">
    <citation type="submission" date="1997-03" db="EMBL/GenBank/DDBJ databases">
        <title>A 148 kbp sequence of the region between 35 and 47 degree of the Bacillus subtilis genome.</title>
        <authorList>
            <person name="Kasahara Y."/>
            <person name="Nakai S."/>
            <person name="Lee S."/>
            <person name="Sadaie Y."/>
            <person name="Ogasawara N."/>
        </authorList>
    </citation>
    <scope>NUCLEOTIDE SEQUENCE [GENOMIC DNA]</scope>
    <source>
        <strain>168</strain>
    </source>
</reference>
<reference key="3">
    <citation type="journal article" date="1997" name="Nature">
        <title>The complete genome sequence of the Gram-positive bacterium Bacillus subtilis.</title>
        <authorList>
            <person name="Kunst F."/>
            <person name="Ogasawara N."/>
            <person name="Moszer I."/>
            <person name="Albertini A.M."/>
            <person name="Alloni G."/>
            <person name="Azevedo V."/>
            <person name="Bertero M.G."/>
            <person name="Bessieres P."/>
            <person name="Bolotin A."/>
            <person name="Borchert S."/>
            <person name="Borriss R."/>
            <person name="Boursier L."/>
            <person name="Brans A."/>
            <person name="Braun M."/>
            <person name="Brignell S.C."/>
            <person name="Bron S."/>
            <person name="Brouillet S."/>
            <person name="Bruschi C.V."/>
            <person name="Caldwell B."/>
            <person name="Capuano V."/>
            <person name="Carter N.M."/>
            <person name="Choi S.-K."/>
            <person name="Codani J.-J."/>
            <person name="Connerton I.F."/>
            <person name="Cummings N.J."/>
            <person name="Daniel R.A."/>
            <person name="Denizot F."/>
            <person name="Devine K.M."/>
            <person name="Duesterhoeft A."/>
            <person name="Ehrlich S.D."/>
            <person name="Emmerson P.T."/>
            <person name="Entian K.-D."/>
            <person name="Errington J."/>
            <person name="Fabret C."/>
            <person name="Ferrari E."/>
            <person name="Foulger D."/>
            <person name="Fritz C."/>
            <person name="Fujita M."/>
            <person name="Fujita Y."/>
            <person name="Fuma S."/>
            <person name="Galizzi A."/>
            <person name="Galleron N."/>
            <person name="Ghim S.-Y."/>
            <person name="Glaser P."/>
            <person name="Goffeau A."/>
            <person name="Golightly E.J."/>
            <person name="Grandi G."/>
            <person name="Guiseppi G."/>
            <person name="Guy B.J."/>
            <person name="Haga K."/>
            <person name="Haiech J."/>
            <person name="Harwood C.R."/>
            <person name="Henaut A."/>
            <person name="Hilbert H."/>
            <person name="Holsappel S."/>
            <person name="Hosono S."/>
            <person name="Hullo M.-F."/>
            <person name="Itaya M."/>
            <person name="Jones L.-M."/>
            <person name="Joris B."/>
            <person name="Karamata D."/>
            <person name="Kasahara Y."/>
            <person name="Klaerr-Blanchard M."/>
            <person name="Klein C."/>
            <person name="Kobayashi Y."/>
            <person name="Koetter P."/>
            <person name="Koningstein G."/>
            <person name="Krogh S."/>
            <person name="Kumano M."/>
            <person name="Kurita K."/>
            <person name="Lapidus A."/>
            <person name="Lardinois S."/>
            <person name="Lauber J."/>
            <person name="Lazarevic V."/>
            <person name="Lee S.-M."/>
            <person name="Levine A."/>
            <person name="Liu H."/>
            <person name="Masuda S."/>
            <person name="Mauel C."/>
            <person name="Medigue C."/>
            <person name="Medina N."/>
            <person name="Mellado R.P."/>
            <person name="Mizuno M."/>
            <person name="Moestl D."/>
            <person name="Nakai S."/>
            <person name="Noback M."/>
            <person name="Noone D."/>
            <person name="O'Reilly M."/>
            <person name="Ogawa K."/>
            <person name="Ogiwara A."/>
            <person name="Oudega B."/>
            <person name="Park S.-H."/>
            <person name="Parro V."/>
            <person name="Pohl T.M."/>
            <person name="Portetelle D."/>
            <person name="Porwollik S."/>
            <person name="Prescott A.M."/>
            <person name="Presecan E."/>
            <person name="Pujic P."/>
            <person name="Purnelle B."/>
            <person name="Rapoport G."/>
            <person name="Rey M."/>
            <person name="Reynolds S."/>
            <person name="Rieger M."/>
            <person name="Rivolta C."/>
            <person name="Rocha E."/>
            <person name="Roche B."/>
            <person name="Rose M."/>
            <person name="Sadaie Y."/>
            <person name="Sato T."/>
            <person name="Scanlan E."/>
            <person name="Schleich S."/>
            <person name="Schroeter R."/>
            <person name="Scoffone F."/>
            <person name="Sekiguchi J."/>
            <person name="Sekowska A."/>
            <person name="Seror S.J."/>
            <person name="Serror P."/>
            <person name="Shin B.-S."/>
            <person name="Soldo B."/>
            <person name="Sorokin A."/>
            <person name="Tacconi E."/>
            <person name="Takagi T."/>
            <person name="Takahashi H."/>
            <person name="Takemaru K."/>
            <person name="Takeuchi M."/>
            <person name="Tamakoshi A."/>
            <person name="Tanaka T."/>
            <person name="Terpstra P."/>
            <person name="Tognoni A."/>
            <person name="Tosato V."/>
            <person name="Uchiyama S."/>
            <person name="Vandenbol M."/>
            <person name="Vannier F."/>
            <person name="Vassarotti A."/>
            <person name="Viari A."/>
            <person name="Wambutt R."/>
            <person name="Wedler E."/>
            <person name="Wedler H."/>
            <person name="Weitzenegger T."/>
            <person name="Winters P."/>
            <person name="Wipat A."/>
            <person name="Yamamoto H."/>
            <person name="Yamane K."/>
            <person name="Yasumoto K."/>
            <person name="Yata K."/>
            <person name="Yoshida K."/>
            <person name="Yoshikawa H.-F."/>
            <person name="Zumstein E."/>
            <person name="Yoshikawa H."/>
            <person name="Danchin A."/>
        </authorList>
    </citation>
    <scope>NUCLEOTIDE SEQUENCE [LARGE SCALE GENOMIC DNA]</scope>
    <source>
        <strain>168</strain>
    </source>
</reference>
<reference key="4">
    <citation type="journal article" date="2001" name="J. Bacteriol.">
        <title>New family of regulators in the environmental signaling pathway which activates the general stress transcription factor sigma(B) of Bacillus subtilis.</title>
        <authorList>
            <person name="Akbar S."/>
            <person name="Gaidenko T.A."/>
            <person name="Kang C.M."/>
            <person name="O'Reilly M."/>
            <person name="Devine K.M."/>
            <person name="Price C.W."/>
        </authorList>
    </citation>
    <scope>FUNCTION</scope>
    <scope>COMPLEX SUGGESTION</scope>
    <scope>DISRUPTION PHENOTYPE</scope>
    <source>
        <strain>168 / Marburg / ATCC 6051 / DSM 10 / JCM 1465 / NBRC 13719 / NCIMB 3610 / NRRL NRS-744 / VKM B-501</strain>
    </source>
</reference>
<reference key="5">
    <citation type="journal article" date="2004" name="J. Mol. Biol.">
        <title>A multicomponent protein complex mediates environmental stress signaling in Bacillus subtilis.</title>
        <authorList>
            <person name="Kim T.-J."/>
            <person name="Gaidenko T.A."/>
            <person name="Price C.W."/>
        </authorList>
    </citation>
    <scope>FUNCTION</scope>
    <scope>SUBUNIT</scope>
    <source>
        <strain>168 / Marburg / ATCC 6051 / DSM 10 / JCM 1465 / NBRC 13719 / NCIMB 3610 / NRRL NRS-744 / VKM B-501</strain>
    </source>
</reference>
<reference key="6">
    <citation type="journal article" date="1999" name="J. Mol. Biol.">
        <title>Threonine phosphorylation of modulator protein RsbR governs its ability to regulate a serine kinase in the environmental stress signaling pathway of Bacillus subtilis.</title>
        <authorList>
            <person name="Gaidenko T.A."/>
            <person name="Yang X."/>
            <person name="Lee Y.M."/>
            <person name="Price C.W."/>
        </authorList>
    </citation>
    <scope>PHOSPHORYLATION AT THR-171 AND THR-205</scope>
    <scope>MUTAGENESIS OF THR-171 AND THR-205</scope>
    <source>
        <strain>168 / Marburg / ATCC 6051 / DSM 10 / JCM 1465 / NBRC 13719 / NCIMB 3610 / NRRL NRS-744 / VKM B-501</strain>
    </source>
</reference>
<reference key="7">
    <citation type="journal article" date="2007" name="Mol. Cell. Proteomics">
        <title>The serine/threonine/tyrosine phosphoproteome of the model bacterium Bacillus subtilis.</title>
        <authorList>
            <person name="Macek B."/>
            <person name="Mijakovic I."/>
            <person name="Olsen J.V."/>
            <person name="Gnad F."/>
            <person name="Kumar C."/>
            <person name="Jensen P.R."/>
            <person name="Mann M."/>
        </authorList>
    </citation>
    <scope>PHOSPHORYLATION [LARGE SCALE ANALYSIS] AT THR-171</scope>
    <scope>IDENTIFICATION BY MASS SPECTROMETRY</scope>
    <source>
        <strain>168</strain>
    </source>
</reference>
<accession>P42409</accession>
<protein>
    <recommendedName>
        <fullName>RsbT co-antagonist protein RsbRA</fullName>
    </recommendedName>
    <alternativeName>
        <fullName>Stressosome protein RsbRA</fullName>
    </alternativeName>
</protein>
<feature type="chain" id="PRO_0000097470" description="RsbT co-antagonist protein RsbRA">
    <location>
        <begin position="1"/>
        <end position="274"/>
    </location>
</feature>
<feature type="domain" description="STAS" evidence="1">
    <location>
        <begin position="150"/>
        <end position="265"/>
    </location>
</feature>
<feature type="modified residue" description="Phosphothreonine" evidence="2 5">
    <location>
        <position position="171"/>
    </location>
</feature>
<feature type="modified residue" description="Phosphothreonine" evidence="2">
    <location>
        <position position="205"/>
    </location>
</feature>
<feature type="mutagenesis site" description="No phosphorylation; when associated with A-205. No stress response. In absence of the other RsbR paralogs greatly reduced stress response." evidence="2">
    <original>T</original>
    <variation>A</variation>
    <location>
        <position position="171"/>
    </location>
</feature>
<feature type="mutagenesis site" description="Decrease in induction of sigma-B activity in response to a salt stress. In absence of the other RsbR paralogs no change in stress response." evidence="2">
    <original>T</original>
    <variation>D</variation>
    <location>
        <position position="171"/>
    </location>
</feature>
<feature type="mutagenesis site" description="No phosphorylation; when associated with A-171. In absence of the other RsbR paralogs unable to function as a co-antagonist when RsbRB." evidence="2">
    <original>T</original>
    <variation>A</variation>
    <location>
        <position position="205"/>
    </location>
</feature>
<feature type="mutagenesis site" description="Decrease in induction of sigma-B activity in response to a salt stress. In absence of the other RsbR paralogs no change in stress response when RsbRB." evidence="2">
    <original>T</original>
    <variation>D</variation>
    <location>
        <position position="205"/>
    </location>
</feature>
<feature type="helix" evidence="6">
    <location>
        <begin position="5"/>
        <end position="13"/>
    </location>
</feature>
<feature type="helix" evidence="6">
    <location>
        <begin position="15"/>
        <end position="30"/>
    </location>
</feature>
<feature type="helix" evidence="6">
    <location>
        <begin position="39"/>
        <end position="54"/>
    </location>
</feature>
<feature type="turn" evidence="6">
    <location>
        <begin position="60"/>
        <end position="63"/>
    </location>
</feature>
<feature type="helix" evidence="6">
    <location>
        <begin position="64"/>
        <end position="76"/>
    </location>
</feature>
<feature type="helix" evidence="6">
    <location>
        <begin position="81"/>
        <end position="100"/>
    </location>
</feature>
<feature type="helix" evidence="6">
    <location>
        <begin position="109"/>
        <end position="135"/>
    </location>
</feature>
<organism>
    <name type="scientific">Bacillus subtilis (strain 168)</name>
    <dbReference type="NCBI Taxonomy" id="224308"/>
    <lineage>
        <taxon>Bacteria</taxon>
        <taxon>Bacillati</taxon>
        <taxon>Bacillota</taxon>
        <taxon>Bacilli</taxon>
        <taxon>Bacillales</taxon>
        <taxon>Bacillaceae</taxon>
        <taxon>Bacillus</taxon>
    </lineage>
</organism>
<evidence type="ECO:0000255" key="1">
    <source>
        <dbReference type="PROSITE-ProRule" id="PRU00198"/>
    </source>
</evidence>
<evidence type="ECO:0000269" key="2">
    <source>
    </source>
</evidence>
<evidence type="ECO:0000269" key="3">
    <source>
    </source>
</evidence>
<evidence type="ECO:0000269" key="4">
    <source>
    </source>
</evidence>
<evidence type="ECO:0000269" key="5">
    <source>
    </source>
</evidence>
<evidence type="ECO:0007829" key="6">
    <source>
        <dbReference type="PDB" id="2BNL"/>
    </source>
</evidence>
<name>RSBRA_BACSU</name>
<comment type="function">
    <text>Acts as a positive regulator of sigma-B activity in response to salt and heat stress by stimulating the activity of the RsbT kinase toward RsbS in vitro.</text>
</comment>
<comment type="function">
    <text>One of 4 functionally non-identical RsbR paralogs, it functions in the environmental signaling branch of the general stress response.</text>
</comment>
<comment type="function">
    <text>Negative regulator of sigma-B activity. Non-phosphorylated RsbS binds to RsbT, preventing its association with RsbU. Requires any one of RsbRA, RsbRB, RsbRC or RsbRD to sequester RsbT. When RsbS and the RsbR paralog(s) are phosphorylated, they release RsbT, which can then bind and activate RsbU.</text>
</comment>
<comment type="subunit">
    <text evidence="4">Interacts with RsbRB and RsbS in the stressosome. The stressosome probably also contains RsbRC and RsbRD.</text>
</comment>
<comment type="PTM">
    <text evidence="2 5">Phosphorylated by RsbT. This threonine phosphorylation abrogates the ability of RsbRA to stimulate RsbT in vitro.</text>
</comment>
<comment type="disruption phenotype">
    <text evidence="3">Cells lacking this gene have a decreased response to salt stress, indicating that RsbRA is a positive regulator of sigma-B activity. Its activity is dependent on RsbRB.</text>
</comment>